<gene>
    <name type="ordered locus">PD_0802</name>
</gene>
<reference key="1">
    <citation type="journal article" date="2003" name="J. Bacteriol.">
        <title>Comparative analyses of the complete genome sequences of Pierce's disease and citrus variegated chlorosis strains of Xylella fastidiosa.</title>
        <authorList>
            <person name="Van Sluys M.A."/>
            <person name="de Oliveira M.C."/>
            <person name="Monteiro-Vitorello C.B."/>
            <person name="Miyaki C.Y."/>
            <person name="Furlan L.R."/>
            <person name="Camargo L.E.A."/>
            <person name="da Silva A.C.R."/>
            <person name="Moon D.H."/>
            <person name="Takita M.A."/>
            <person name="Lemos E.G.M."/>
            <person name="Machado M.A."/>
            <person name="Ferro M.I.T."/>
            <person name="da Silva F.R."/>
            <person name="Goldman M.H.S."/>
            <person name="Goldman G.H."/>
            <person name="Lemos M.V.F."/>
            <person name="El-Dorry H."/>
            <person name="Tsai S.M."/>
            <person name="Carrer H."/>
            <person name="Carraro D.M."/>
            <person name="de Oliveira R.C."/>
            <person name="Nunes L.R."/>
            <person name="Siqueira W.J."/>
            <person name="Coutinho L.L."/>
            <person name="Kimura E.T."/>
            <person name="Ferro E.S."/>
            <person name="Harakava R."/>
            <person name="Kuramae E.E."/>
            <person name="Marino C.L."/>
            <person name="Giglioti E."/>
            <person name="Abreu I.L."/>
            <person name="Alves L.M.C."/>
            <person name="do Amaral A.M."/>
            <person name="Baia G.S."/>
            <person name="Blanco S.R."/>
            <person name="Brito M.S."/>
            <person name="Cannavan F.S."/>
            <person name="Celestino A.V."/>
            <person name="da Cunha A.F."/>
            <person name="Fenille R.C."/>
            <person name="Ferro J.A."/>
            <person name="Formighieri E.F."/>
            <person name="Kishi L.T."/>
            <person name="Leoni S.G."/>
            <person name="Oliveira A.R."/>
            <person name="Rosa V.E. Jr."/>
            <person name="Sassaki F.T."/>
            <person name="Sena J.A.D."/>
            <person name="de Souza A.A."/>
            <person name="Truffi D."/>
            <person name="Tsukumo F."/>
            <person name="Yanai G.M."/>
            <person name="Zaros L.G."/>
            <person name="Civerolo E.L."/>
            <person name="Simpson A.J.G."/>
            <person name="Almeida N.F. Jr."/>
            <person name="Setubal J.C."/>
            <person name="Kitajima J.P."/>
        </authorList>
    </citation>
    <scope>NUCLEOTIDE SEQUENCE [LARGE SCALE GENOMIC DNA]</scope>
    <source>
        <strain>Temecula1 / ATCC 700964</strain>
    </source>
</reference>
<protein>
    <recommendedName>
        <fullName evidence="1">UPF0149 protein PD_0802</fullName>
    </recommendedName>
</protein>
<sequence>MESPMHLPEVIAVEQESQQMGLSVTAPELHGSLSGLLAGGGCNGPDWLAMILADAGVAAPPKGSVLERLYQATASQLEDPDFAFQLLLADDGATLAARAHALFEWCRAFLGGFGLAAHCRSVLSAEGDEILRDLAKLAQASVDDFDMNEEKEDGSLEEIEEFVRVAVLLLHGDCLIGPCAPQRLN</sequence>
<feature type="chain" id="PRO_0000207577" description="UPF0149 protein PD_0802">
    <location>
        <begin position="1"/>
        <end position="185"/>
    </location>
</feature>
<comment type="similarity">
    <text evidence="1">Belongs to the UPF0149 family.</text>
</comment>
<keyword id="KW-1185">Reference proteome</keyword>
<organism>
    <name type="scientific">Xylella fastidiosa (strain Temecula1 / ATCC 700964)</name>
    <dbReference type="NCBI Taxonomy" id="183190"/>
    <lineage>
        <taxon>Bacteria</taxon>
        <taxon>Pseudomonadati</taxon>
        <taxon>Pseudomonadota</taxon>
        <taxon>Gammaproteobacteria</taxon>
        <taxon>Lysobacterales</taxon>
        <taxon>Lysobacteraceae</taxon>
        <taxon>Xylella</taxon>
    </lineage>
</organism>
<name>Y802_XYLFT</name>
<proteinExistence type="inferred from homology"/>
<evidence type="ECO:0000255" key="1">
    <source>
        <dbReference type="HAMAP-Rule" id="MF_00346"/>
    </source>
</evidence>
<accession>Q87D84</accession>
<dbReference type="EMBL" id="AE009442">
    <property type="protein sequence ID" value="AAO28670.1"/>
    <property type="molecule type" value="Genomic_DNA"/>
</dbReference>
<dbReference type="SMR" id="Q87D84"/>
<dbReference type="KEGG" id="xft:PD_0802"/>
<dbReference type="HOGENOM" id="CLU_085336_0_0_6"/>
<dbReference type="Proteomes" id="UP000002516">
    <property type="component" value="Chromosome"/>
</dbReference>
<dbReference type="GO" id="GO:0005829">
    <property type="term" value="C:cytosol"/>
    <property type="evidence" value="ECO:0007669"/>
    <property type="project" value="TreeGrafter"/>
</dbReference>
<dbReference type="Gene3D" id="1.20.120.740">
    <property type="entry name" value="YgfB uncharacterised protein family UPF0149, PF03695"/>
    <property type="match status" value="1"/>
</dbReference>
<dbReference type="HAMAP" id="MF_00346">
    <property type="entry name" value="UPF0149"/>
    <property type="match status" value="1"/>
</dbReference>
<dbReference type="InterPro" id="IPR011978">
    <property type="entry name" value="YgfB-like"/>
</dbReference>
<dbReference type="InterPro" id="IPR036255">
    <property type="entry name" value="YgfB-like_sf"/>
</dbReference>
<dbReference type="NCBIfam" id="NF003405">
    <property type="entry name" value="PRK04758.1"/>
    <property type="match status" value="1"/>
</dbReference>
<dbReference type="NCBIfam" id="TIGR02292">
    <property type="entry name" value="ygfB_yecA"/>
    <property type="match status" value="1"/>
</dbReference>
<dbReference type="PANTHER" id="PTHR37528">
    <property type="entry name" value="UPF0149 PROTEIN YGFB"/>
    <property type="match status" value="1"/>
</dbReference>
<dbReference type="PANTHER" id="PTHR37528:SF1">
    <property type="entry name" value="UPF0149 PROTEIN YGFB"/>
    <property type="match status" value="1"/>
</dbReference>
<dbReference type="Pfam" id="PF03695">
    <property type="entry name" value="UPF0149"/>
    <property type="match status" value="1"/>
</dbReference>
<dbReference type="SUPFAM" id="SSF101327">
    <property type="entry name" value="YgfB-like"/>
    <property type="match status" value="1"/>
</dbReference>